<organism>
    <name type="scientific">Xenopus tropicalis</name>
    <name type="common">Western clawed frog</name>
    <name type="synonym">Silurana tropicalis</name>
    <dbReference type="NCBI Taxonomy" id="8364"/>
    <lineage>
        <taxon>Eukaryota</taxon>
        <taxon>Metazoa</taxon>
        <taxon>Chordata</taxon>
        <taxon>Craniata</taxon>
        <taxon>Vertebrata</taxon>
        <taxon>Euteleostomi</taxon>
        <taxon>Amphibia</taxon>
        <taxon>Batrachia</taxon>
        <taxon>Anura</taxon>
        <taxon>Pipoidea</taxon>
        <taxon>Pipidae</taxon>
        <taxon>Xenopodinae</taxon>
        <taxon>Xenopus</taxon>
        <taxon>Silurana</taxon>
    </lineage>
</organism>
<gene>
    <name type="primary">syt17</name>
</gene>
<feature type="chain" id="PRO_0000311940" description="Synaptotagmin-17">
    <location>
        <begin position="1"/>
        <end position="474"/>
    </location>
</feature>
<feature type="domain" description="C2 1" evidence="3">
    <location>
        <begin position="184"/>
        <end position="310"/>
    </location>
</feature>
<feature type="domain" description="C2 2" evidence="3">
    <location>
        <begin position="321"/>
        <end position="455"/>
    </location>
</feature>
<feature type="region of interest" description="Disordered" evidence="4">
    <location>
        <begin position="54"/>
        <end position="112"/>
    </location>
</feature>
<feature type="compositionally biased region" description="Low complexity" evidence="4">
    <location>
        <begin position="96"/>
        <end position="112"/>
    </location>
</feature>
<reference key="1">
    <citation type="submission" date="2007-03" db="EMBL/GenBank/DDBJ databases">
        <authorList>
            <consortium name="NIH - Xenopus Gene Collection (XGC) project"/>
        </authorList>
    </citation>
    <scope>NUCLEOTIDE SEQUENCE [LARGE SCALE MRNA]</scope>
    <source>
        <tissue>Brain</tissue>
    </source>
</reference>
<accession>A4IJ05</accession>
<keyword id="KW-0221">Differentiation</keyword>
<keyword id="KW-0472">Membrane</keyword>
<keyword id="KW-1185">Reference proteome</keyword>
<keyword id="KW-0677">Repeat</keyword>
<proteinExistence type="evidence at transcript level"/>
<protein>
    <recommendedName>
        <fullName>Synaptotagmin-17</fullName>
    </recommendedName>
    <alternativeName>
        <fullName>Synaptotagmin XVII</fullName>
        <shortName>SytXVII</shortName>
    </alternativeName>
</protein>
<dbReference type="EMBL" id="BC136225">
    <property type="protein sequence ID" value="AAI36226.1"/>
    <property type="molecule type" value="mRNA"/>
</dbReference>
<dbReference type="RefSeq" id="NP_001096478.1">
    <property type="nucleotide sequence ID" value="NM_001103008.1"/>
</dbReference>
<dbReference type="SMR" id="A4IJ05"/>
<dbReference type="FunCoup" id="A4IJ05">
    <property type="interactions" value="38"/>
</dbReference>
<dbReference type="STRING" id="8364.ENSXETP00000017731"/>
<dbReference type="PaxDb" id="8364-ENSXETP00000061793"/>
<dbReference type="DNASU" id="100125097"/>
<dbReference type="GeneID" id="100125097"/>
<dbReference type="KEGG" id="xtr:100125097"/>
<dbReference type="AGR" id="Xenbase:XB-GENE-949409"/>
<dbReference type="CTD" id="51760"/>
<dbReference type="Xenbase" id="XB-GENE-949409">
    <property type="gene designation" value="syt17"/>
</dbReference>
<dbReference type="eggNOG" id="KOG1028">
    <property type="taxonomic scope" value="Eukaryota"/>
</dbReference>
<dbReference type="HOGENOM" id="CLU_023008_9_0_1"/>
<dbReference type="InParanoid" id="A4IJ05"/>
<dbReference type="OMA" id="PESSHWR"/>
<dbReference type="OrthoDB" id="270970at2759"/>
<dbReference type="PhylomeDB" id="A4IJ05"/>
<dbReference type="TreeFam" id="TF315600"/>
<dbReference type="Proteomes" id="UP000008143">
    <property type="component" value="Chromosome 9"/>
</dbReference>
<dbReference type="Bgee" id="ENSXETG00000032441">
    <property type="expression patterns" value="Expressed in brain and 3 other cell types or tissues"/>
</dbReference>
<dbReference type="GO" id="GO:0016020">
    <property type="term" value="C:membrane"/>
    <property type="evidence" value="ECO:0007669"/>
    <property type="project" value="UniProtKB-SubCell"/>
</dbReference>
<dbReference type="GO" id="GO:0030154">
    <property type="term" value="P:cell differentiation"/>
    <property type="evidence" value="ECO:0007669"/>
    <property type="project" value="UniProtKB-KW"/>
</dbReference>
<dbReference type="CDD" id="cd08390">
    <property type="entry name" value="C2A_Synaptotagmin-15-17"/>
    <property type="match status" value="1"/>
</dbReference>
<dbReference type="CDD" id="cd08410">
    <property type="entry name" value="C2B_Synaptotagmin-17"/>
    <property type="match status" value="1"/>
</dbReference>
<dbReference type="FunFam" id="2.60.40.150:FF:000053">
    <property type="entry name" value="synaptotagmin-17 isoform X1"/>
    <property type="match status" value="1"/>
</dbReference>
<dbReference type="FunFam" id="2.60.40.150:FF:000064">
    <property type="entry name" value="synaptotagmin-17 isoform X1"/>
    <property type="match status" value="1"/>
</dbReference>
<dbReference type="Gene3D" id="2.60.40.150">
    <property type="entry name" value="C2 domain"/>
    <property type="match status" value="2"/>
</dbReference>
<dbReference type="InterPro" id="IPR000008">
    <property type="entry name" value="C2_dom"/>
</dbReference>
<dbReference type="InterPro" id="IPR035892">
    <property type="entry name" value="C2_domain_sf"/>
</dbReference>
<dbReference type="InterPro" id="IPR001565">
    <property type="entry name" value="Synaptotagmin"/>
</dbReference>
<dbReference type="InterPro" id="IPR047897">
    <property type="entry name" value="Synaptotagmin-15/17_C2A"/>
</dbReference>
<dbReference type="InterPro" id="IPR014705">
    <property type="entry name" value="Syt17_C2B"/>
</dbReference>
<dbReference type="PANTHER" id="PTHR10024">
    <property type="entry name" value="SYNAPTOTAGMIN"/>
    <property type="match status" value="1"/>
</dbReference>
<dbReference type="PANTHER" id="PTHR10024:SF348">
    <property type="entry name" value="SYNAPTOTAGMIN-17"/>
    <property type="match status" value="1"/>
</dbReference>
<dbReference type="Pfam" id="PF00168">
    <property type="entry name" value="C2"/>
    <property type="match status" value="2"/>
</dbReference>
<dbReference type="PRINTS" id="PR00399">
    <property type="entry name" value="SYNAPTOTAGMN"/>
</dbReference>
<dbReference type="SMART" id="SM00239">
    <property type="entry name" value="C2"/>
    <property type="match status" value="2"/>
</dbReference>
<dbReference type="SUPFAM" id="SSF49562">
    <property type="entry name" value="C2 domain (Calcium/lipid-binding domain, CaLB)"/>
    <property type="match status" value="2"/>
</dbReference>
<dbReference type="PROSITE" id="PS50004">
    <property type="entry name" value="C2"/>
    <property type="match status" value="2"/>
</dbReference>
<name>SYT17_XENTR</name>
<evidence type="ECO:0000250" key="1"/>
<evidence type="ECO:0000250" key="2">
    <source>
        <dbReference type="UniProtKB" id="Q9BSW7"/>
    </source>
</evidence>
<evidence type="ECO:0000255" key="3">
    <source>
        <dbReference type="PROSITE-ProRule" id="PRU00041"/>
    </source>
</evidence>
<evidence type="ECO:0000256" key="4">
    <source>
        <dbReference type="SAM" id="MobiDB-lite"/>
    </source>
</evidence>
<evidence type="ECO:0000305" key="5"/>
<comment type="function">
    <text evidence="2">May play a role in dendrite formation by melanocytes.</text>
</comment>
<comment type="subcellular location">
    <subcellularLocation>
        <location evidence="1">Membrane</location>
        <topology evidence="1">Peripheral membrane protein</topology>
    </subcellularLocation>
</comment>
<comment type="similarity">
    <text evidence="5">Belongs to the synaptotagmin family.</text>
</comment>
<sequence>MAYIQLEPINEGFLSKISDLLLCRWTCRNCCQKCYECSCCQSSEDEVEILGPFPAQTPPWLVSNRSEDKEGDSDNTTSEPPATPQDTSPDRRRSSSDTSRSTYSLTRRISSLESRRPSSPLIDIKPIEFGALGAKKEIVQPTVLRKSYTPEDYFRKFEPRLYSLDSSNDDVDSLTDDEILTKYQLGMLHFSTQYDLLHNYLNVRVIEARDLPPPISYDGSRQDMAHSNPYVKICLLPDQKNSKQTGVKRKTQNPVFEERYTFEIQFLEAQRRTLLLTIVDFDKFSRHCVIGKVAMPLNEVDLVKGGHWWKAIIPSSQNEVELGELLLSLNYLPSAGRLNVDIIRAKQLLQTDMSQGSDPFVKIQLVHGLKLAKTKKTSCMRGTIDPFYNESFSFKVPQEELENVSLVFTVYGHNMKTSNDFIGRIVIGQYASGSPESNHWRRMLNSNRTAVEQWHSLRSRAECDRVSPASLEVT</sequence>